<feature type="chain" id="PRO_0000218624" description="Uncharacterized protein C63.05">
    <location>
        <begin position="1"/>
        <end position="323"/>
    </location>
</feature>
<feature type="region of interest" description="Disordered" evidence="1">
    <location>
        <begin position="185"/>
        <end position="214"/>
    </location>
</feature>
<feature type="region of interest" description="Disordered" evidence="1">
    <location>
        <begin position="271"/>
        <end position="294"/>
    </location>
</feature>
<dbReference type="EMBL" id="CU329672">
    <property type="protein sequence ID" value="CAB40009.1"/>
    <property type="molecule type" value="Genomic_DNA"/>
</dbReference>
<dbReference type="PIR" id="T41506">
    <property type="entry name" value="T41506"/>
</dbReference>
<dbReference type="SMR" id="Q9Y7T1"/>
<dbReference type="BioGRID" id="275733">
    <property type="interactions" value="3"/>
</dbReference>
<dbReference type="FunCoup" id="Q9Y7T1">
    <property type="interactions" value="526"/>
</dbReference>
<dbReference type="STRING" id="284812.Q9Y7T1"/>
<dbReference type="iPTMnet" id="Q9Y7T1"/>
<dbReference type="PaxDb" id="4896-SPCC63.05.1"/>
<dbReference type="EnsemblFungi" id="SPCC63.05.1">
    <property type="protein sequence ID" value="SPCC63.05.1:pep"/>
    <property type="gene ID" value="SPCC63.05"/>
</dbReference>
<dbReference type="KEGG" id="spo:2539161"/>
<dbReference type="PomBase" id="SPCC63.05"/>
<dbReference type="VEuPathDB" id="FungiDB:SPCC63.05"/>
<dbReference type="eggNOG" id="KOG2830">
    <property type="taxonomic scope" value="Eukaryota"/>
</dbReference>
<dbReference type="HOGENOM" id="CLU_041824_2_0_1"/>
<dbReference type="InParanoid" id="Q9Y7T1"/>
<dbReference type="OMA" id="EYELCEA"/>
<dbReference type="PhylomeDB" id="Q9Y7T1"/>
<dbReference type="PRO" id="PR:Q9Y7T1"/>
<dbReference type="Proteomes" id="UP000002485">
    <property type="component" value="Chromosome III"/>
</dbReference>
<dbReference type="GO" id="GO:0005737">
    <property type="term" value="C:cytoplasm"/>
    <property type="evidence" value="ECO:0007005"/>
    <property type="project" value="PomBase"/>
</dbReference>
<dbReference type="GO" id="GO:0005829">
    <property type="term" value="C:cytosol"/>
    <property type="evidence" value="ECO:0007005"/>
    <property type="project" value="PomBase"/>
</dbReference>
<dbReference type="GO" id="GO:0005634">
    <property type="term" value="C:nucleus"/>
    <property type="evidence" value="ECO:0007005"/>
    <property type="project" value="PomBase"/>
</dbReference>
<dbReference type="GO" id="GO:0051721">
    <property type="term" value="F:protein phosphatase 2A binding"/>
    <property type="evidence" value="ECO:0000318"/>
    <property type="project" value="GO_Central"/>
</dbReference>
<dbReference type="GO" id="GO:0035303">
    <property type="term" value="P:regulation of dephosphorylation"/>
    <property type="evidence" value="ECO:0000318"/>
    <property type="project" value="GO_Central"/>
</dbReference>
<dbReference type="GO" id="GO:1903432">
    <property type="term" value="P:regulation of TORC1 signaling"/>
    <property type="evidence" value="ECO:0000266"/>
    <property type="project" value="PomBase"/>
</dbReference>
<dbReference type="Gene3D" id="1.25.40.540">
    <property type="entry name" value="TAP42-like family"/>
    <property type="match status" value="1"/>
</dbReference>
<dbReference type="InterPro" id="IPR038511">
    <property type="entry name" value="TAP42/TAP46-like_sf"/>
</dbReference>
<dbReference type="InterPro" id="IPR007304">
    <property type="entry name" value="TAP46-like"/>
</dbReference>
<dbReference type="PANTHER" id="PTHR10933">
    <property type="entry name" value="IMMUNOGLOBULIN-BINDING PROTEIN 1"/>
    <property type="match status" value="1"/>
</dbReference>
<dbReference type="PANTHER" id="PTHR10933:SF9">
    <property type="entry name" value="IMMUNOGLOBULIN-BINDING PROTEIN 1"/>
    <property type="match status" value="1"/>
</dbReference>
<dbReference type="Pfam" id="PF04177">
    <property type="entry name" value="TAP42"/>
    <property type="match status" value="1"/>
</dbReference>
<evidence type="ECO:0000256" key="1">
    <source>
        <dbReference type="SAM" id="MobiDB-lite"/>
    </source>
</evidence>
<evidence type="ECO:0000305" key="2"/>
<proteinExistence type="inferred from homology"/>
<name>YCJ5_SCHPO</name>
<comment type="similarity">
    <text evidence="2">Belongs to the IGBP1/TAP42 family.</text>
</comment>
<sequence length="323" mass="38206">MESKSLRELWEETEKLKDSSSTDEKTRSEIVEGYEKCLKLVLQLRIFSSNEEVDEIKTSELRYLMIDYELAKCVEQWTKGDRLKAVQYAKTHYETFLSICDDYGLKPMQDEKPKTEADTRTLKIARYRMRQNLEKELKALSKDSETNEEQERKFWLTKLQIAVEDTLDSLPHIEMEIDLLKRAQAELMKSEDSPEKDEETLRREERKQKEGSSWRLDLNTRDKILDKNNRPLQPFTIVSDRNETRKNVFGFGYNLPTMTVDEYLDEEMKRGNIISQKDNPPKSDSDDEDDYEKLDAKTMKDRYWDEFKEANPRGSGNTMVNRG</sequence>
<organism>
    <name type="scientific">Schizosaccharomyces pombe (strain 972 / ATCC 24843)</name>
    <name type="common">Fission yeast</name>
    <dbReference type="NCBI Taxonomy" id="284812"/>
    <lineage>
        <taxon>Eukaryota</taxon>
        <taxon>Fungi</taxon>
        <taxon>Dikarya</taxon>
        <taxon>Ascomycota</taxon>
        <taxon>Taphrinomycotina</taxon>
        <taxon>Schizosaccharomycetes</taxon>
        <taxon>Schizosaccharomycetales</taxon>
        <taxon>Schizosaccharomycetaceae</taxon>
        <taxon>Schizosaccharomyces</taxon>
    </lineage>
</organism>
<accession>Q9Y7T1</accession>
<reference key="1">
    <citation type="journal article" date="2002" name="Nature">
        <title>The genome sequence of Schizosaccharomyces pombe.</title>
        <authorList>
            <person name="Wood V."/>
            <person name="Gwilliam R."/>
            <person name="Rajandream M.A."/>
            <person name="Lyne M.H."/>
            <person name="Lyne R."/>
            <person name="Stewart A."/>
            <person name="Sgouros J.G."/>
            <person name="Peat N."/>
            <person name="Hayles J."/>
            <person name="Baker S.G."/>
            <person name="Basham D."/>
            <person name="Bowman S."/>
            <person name="Brooks K."/>
            <person name="Brown D."/>
            <person name="Brown S."/>
            <person name="Chillingworth T."/>
            <person name="Churcher C.M."/>
            <person name="Collins M."/>
            <person name="Connor R."/>
            <person name="Cronin A."/>
            <person name="Davis P."/>
            <person name="Feltwell T."/>
            <person name="Fraser A."/>
            <person name="Gentles S."/>
            <person name="Goble A."/>
            <person name="Hamlin N."/>
            <person name="Harris D.E."/>
            <person name="Hidalgo J."/>
            <person name="Hodgson G."/>
            <person name="Holroyd S."/>
            <person name="Hornsby T."/>
            <person name="Howarth S."/>
            <person name="Huckle E.J."/>
            <person name="Hunt S."/>
            <person name="Jagels K."/>
            <person name="James K.D."/>
            <person name="Jones L."/>
            <person name="Jones M."/>
            <person name="Leather S."/>
            <person name="McDonald S."/>
            <person name="McLean J."/>
            <person name="Mooney P."/>
            <person name="Moule S."/>
            <person name="Mungall K.L."/>
            <person name="Murphy L.D."/>
            <person name="Niblett D."/>
            <person name="Odell C."/>
            <person name="Oliver K."/>
            <person name="O'Neil S."/>
            <person name="Pearson D."/>
            <person name="Quail M.A."/>
            <person name="Rabbinowitsch E."/>
            <person name="Rutherford K.M."/>
            <person name="Rutter S."/>
            <person name="Saunders D."/>
            <person name="Seeger K."/>
            <person name="Sharp S."/>
            <person name="Skelton J."/>
            <person name="Simmonds M.N."/>
            <person name="Squares R."/>
            <person name="Squares S."/>
            <person name="Stevens K."/>
            <person name="Taylor K."/>
            <person name="Taylor R.G."/>
            <person name="Tivey A."/>
            <person name="Walsh S.V."/>
            <person name="Warren T."/>
            <person name="Whitehead S."/>
            <person name="Woodward J.R."/>
            <person name="Volckaert G."/>
            <person name="Aert R."/>
            <person name="Robben J."/>
            <person name="Grymonprez B."/>
            <person name="Weltjens I."/>
            <person name="Vanstreels E."/>
            <person name="Rieger M."/>
            <person name="Schaefer M."/>
            <person name="Mueller-Auer S."/>
            <person name="Gabel C."/>
            <person name="Fuchs M."/>
            <person name="Duesterhoeft A."/>
            <person name="Fritzc C."/>
            <person name="Holzer E."/>
            <person name="Moestl D."/>
            <person name="Hilbert H."/>
            <person name="Borzym K."/>
            <person name="Langer I."/>
            <person name="Beck A."/>
            <person name="Lehrach H."/>
            <person name="Reinhardt R."/>
            <person name="Pohl T.M."/>
            <person name="Eger P."/>
            <person name="Zimmermann W."/>
            <person name="Wedler H."/>
            <person name="Wambutt R."/>
            <person name="Purnelle B."/>
            <person name="Goffeau A."/>
            <person name="Cadieu E."/>
            <person name="Dreano S."/>
            <person name="Gloux S."/>
            <person name="Lelaure V."/>
            <person name="Mottier S."/>
            <person name="Galibert F."/>
            <person name="Aves S.J."/>
            <person name="Xiang Z."/>
            <person name="Hunt C."/>
            <person name="Moore K."/>
            <person name="Hurst S.M."/>
            <person name="Lucas M."/>
            <person name="Rochet M."/>
            <person name="Gaillardin C."/>
            <person name="Tallada V.A."/>
            <person name="Garzon A."/>
            <person name="Thode G."/>
            <person name="Daga R.R."/>
            <person name="Cruzado L."/>
            <person name="Jimenez J."/>
            <person name="Sanchez M."/>
            <person name="del Rey F."/>
            <person name="Benito J."/>
            <person name="Dominguez A."/>
            <person name="Revuelta J.L."/>
            <person name="Moreno S."/>
            <person name="Armstrong J."/>
            <person name="Forsburg S.L."/>
            <person name="Cerutti L."/>
            <person name="Lowe T."/>
            <person name="McCombie W.R."/>
            <person name="Paulsen I."/>
            <person name="Potashkin J."/>
            <person name="Shpakovski G.V."/>
            <person name="Ussery D."/>
            <person name="Barrell B.G."/>
            <person name="Nurse P."/>
        </authorList>
    </citation>
    <scope>NUCLEOTIDE SEQUENCE [LARGE SCALE GENOMIC DNA]</scope>
    <source>
        <strain>972 / ATCC 24843</strain>
    </source>
</reference>
<gene>
    <name type="ORF">SPCC63.05</name>
</gene>
<protein>
    <recommendedName>
        <fullName>Uncharacterized protein C63.05</fullName>
    </recommendedName>
</protein>
<keyword id="KW-1185">Reference proteome</keyword>